<feature type="chain" id="PRO_0000287720" description="RNA-binding motif, single-stranded-interacting protein 2">
    <location>
        <begin position="1"/>
        <end position="407"/>
    </location>
</feature>
<feature type="domain" description="RRM 1" evidence="2">
    <location>
        <begin position="56"/>
        <end position="129"/>
    </location>
</feature>
<feature type="domain" description="RRM 2" evidence="2">
    <location>
        <begin position="135"/>
        <end position="220"/>
    </location>
</feature>
<feature type="region of interest" description="Disordered" evidence="3">
    <location>
        <begin position="14"/>
        <end position="51"/>
    </location>
</feature>
<feature type="region of interest" description="Disordered" evidence="3">
    <location>
        <begin position="374"/>
        <end position="398"/>
    </location>
</feature>
<feature type="compositionally biased region" description="Low complexity" evidence="3">
    <location>
        <begin position="37"/>
        <end position="47"/>
    </location>
</feature>
<feature type="compositionally biased region" description="Low complexity" evidence="3">
    <location>
        <begin position="374"/>
        <end position="392"/>
    </location>
</feature>
<feature type="modified residue" description="N-acetylmethionine" evidence="1">
    <location>
        <position position="1"/>
    </location>
</feature>
<feature type="modified residue" description="Phosphoserine" evidence="1">
    <location>
        <position position="106"/>
    </location>
</feature>
<feature type="modified residue" description="Phosphoserine" evidence="1">
    <location>
        <position position="280"/>
    </location>
</feature>
<feature type="modified residue" description="Phosphoserine" evidence="1">
    <location>
        <position position="285"/>
    </location>
</feature>
<comment type="subcellular location">
    <subcellularLocation>
        <location evidence="4">Nucleus</location>
    </subcellularLocation>
</comment>
<dbReference type="EMBL" id="BC102935">
    <property type="protein sequence ID" value="AAI02936.1"/>
    <property type="molecule type" value="mRNA"/>
</dbReference>
<dbReference type="RefSeq" id="NP_001029537.1">
    <property type="nucleotide sequence ID" value="NM_001034365.2"/>
</dbReference>
<dbReference type="RefSeq" id="XP_005206596.1">
    <property type="nucleotide sequence ID" value="XM_005206539.5"/>
</dbReference>
<dbReference type="RefSeq" id="XP_010803446.1">
    <property type="nucleotide sequence ID" value="XM_010805144.4"/>
</dbReference>
<dbReference type="RefSeq" id="XP_015326564.1">
    <property type="nucleotide sequence ID" value="XM_015471078.1"/>
</dbReference>
<dbReference type="RefSeq" id="XP_015326565.1">
    <property type="nucleotide sequence ID" value="XM_015471079.3"/>
</dbReference>
<dbReference type="RefSeq" id="XP_059742225.1">
    <property type="nucleotide sequence ID" value="XM_059886242.1"/>
</dbReference>
<dbReference type="RefSeq" id="XP_059742226.1">
    <property type="nucleotide sequence ID" value="XM_059886243.1"/>
</dbReference>
<dbReference type="RefSeq" id="XP_059742227.1">
    <property type="nucleotide sequence ID" value="XM_059886244.1"/>
</dbReference>
<dbReference type="RefSeq" id="XP_059742228.1">
    <property type="nucleotide sequence ID" value="XM_059886245.1"/>
</dbReference>
<dbReference type="SMR" id="Q3ZC34"/>
<dbReference type="FunCoup" id="Q3ZC34">
    <property type="interactions" value="1553"/>
</dbReference>
<dbReference type="STRING" id="9913.ENSBTAP00000023705"/>
<dbReference type="PaxDb" id="9913-ENSBTAP00000023705"/>
<dbReference type="Ensembl" id="ENSBTAT00000023705.4">
    <property type="protein sequence ID" value="ENSBTAP00000023705.3"/>
    <property type="gene ID" value="ENSBTAG00000017830.5"/>
</dbReference>
<dbReference type="GeneID" id="509798"/>
<dbReference type="KEGG" id="bta:509798"/>
<dbReference type="CTD" id="5939"/>
<dbReference type="VEuPathDB" id="HostDB:ENSBTAG00000017830"/>
<dbReference type="VGNC" id="VGNC:33810">
    <property type="gene designation" value="RBMS2"/>
</dbReference>
<dbReference type="eggNOG" id="KOG4733">
    <property type="taxonomic scope" value="Eukaryota"/>
</dbReference>
<dbReference type="GeneTree" id="ENSGT00940000155250"/>
<dbReference type="HOGENOM" id="CLU_016278_2_0_1"/>
<dbReference type="InParanoid" id="Q3ZC34"/>
<dbReference type="OMA" id="PNASWMH"/>
<dbReference type="OrthoDB" id="271725at2759"/>
<dbReference type="TreeFam" id="TF314644"/>
<dbReference type="Proteomes" id="UP000009136">
    <property type="component" value="Chromosome 5"/>
</dbReference>
<dbReference type="Bgee" id="ENSBTAG00000017830">
    <property type="expression patterns" value="Expressed in semen and 109 other cell types or tissues"/>
</dbReference>
<dbReference type="GO" id="GO:0005829">
    <property type="term" value="C:cytosol"/>
    <property type="evidence" value="ECO:0000318"/>
    <property type="project" value="GO_Central"/>
</dbReference>
<dbReference type="GO" id="GO:0005634">
    <property type="term" value="C:nucleus"/>
    <property type="evidence" value="ECO:0000318"/>
    <property type="project" value="GO_Central"/>
</dbReference>
<dbReference type="GO" id="GO:1990904">
    <property type="term" value="C:ribonucleoprotein complex"/>
    <property type="evidence" value="ECO:0000318"/>
    <property type="project" value="GO_Central"/>
</dbReference>
<dbReference type="GO" id="GO:0003730">
    <property type="term" value="F:mRNA 3'-UTR binding"/>
    <property type="evidence" value="ECO:0000318"/>
    <property type="project" value="GO_Central"/>
</dbReference>
<dbReference type="GO" id="GO:0008143">
    <property type="term" value="F:poly(A) binding"/>
    <property type="evidence" value="ECO:0000318"/>
    <property type="project" value="GO_Central"/>
</dbReference>
<dbReference type="GO" id="GO:0008266">
    <property type="term" value="F:poly(U) RNA binding"/>
    <property type="evidence" value="ECO:0000318"/>
    <property type="project" value="GO_Central"/>
</dbReference>
<dbReference type="CDD" id="cd12474">
    <property type="entry name" value="RRM2_MSSP2"/>
    <property type="match status" value="1"/>
</dbReference>
<dbReference type="FunFam" id="3.30.70.330:FF:000012">
    <property type="entry name" value="RNA-binding motif, single-stranded-interacting protein 3 isoform 1"/>
    <property type="match status" value="1"/>
</dbReference>
<dbReference type="FunFam" id="3.30.70.330:FF:000014">
    <property type="entry name" value="RNA-binding motif, single-stranded-interacting protein 3 isoform 1"/>
    <property type="match status" value="1"/>
</dbReference>
<dbReference type="Gene3D" id="3.30.70.330">
    <property type="match status" value="2"/>
</dbReference>
<dbReference type="InterPro" id="IPR002343">
    <property type="entry name" value="Hud_Sxl_RNA"/>
</dbReference>
<dbReference type="InterPro" id="IPR012677">
    <property type="entry name" value="Nucleotide-bd_a/b_plait_sf"/>
</dbReference>
<dbReference type="InterPro" id="IPR035979">
    <property type="entry name" value="RBD_domain_sf"/>
</dbReference>
<dbReference type="InterPro" id="IPR000504">
    <property type="entry name" value="RRM_dom"/>
</dbReference>
<dbReference type="PANTHER" id="PTHR24012">
    <property type="entry name" value="RNA BINDING PROTEIN"/>
    <property type="match status" value="1"/>
</dbReference>
<dbReference type="Pfam" id="PF00076">
    <property type="entry name" value="RRM_1"/>
    <property type="match status" value="2"/>
</dbReference>
<dbReference type="PRINTS" id="PR00961">
    <property type="entry name" value="HUDSXLRNA"/>
</dbReference>
<dbReference type="SMART" id="SM00360">
    <property type="entry name" value="RRM"/>
    <property type="match status" value="2"/>
</dbReference>
<dbReference type="SUPFAM" id="SSF54928">
    <property type="entry name" value="RNA-binding domain, RBD"/>
    <property type="match status" value="2"/>
</dbReference>
<dbReference type="PROSITE" id="PS50102">
    <property type="entry name" value="RRM"/>
    <property type="match status" value="2"/>
</dbReference>
<gene>
    <name type="primary">RBMS2</name>
</gene>
<reference key="1">
    <citation type="submission" date="2005-08" db="EMBL/GenBank/DDBJ databases">
        <authorList>
            <consortium name="NIH - Mammalian Gene Collection (MGC) project"/>
        </authorList>
    </citation>
    <scope>NUCLEOTIDE SEQUENCE [LARGE SCALE MRNA]</scope>
    <source>
        <strain>Hereford</strain>
        <tissue>Fetal liver</tissue>
    </source>
</reference>
<name>RBMS2_BOVIN</name>
<accession>Q3ZC34</accession>
<keyword id="KW-0007">Acetylation</keyword>
<keyword id="KW-0539">Nucleus</keyword>
<keyword id="KW-0597">Phosphoprotein</keyword>
<keyword id="KW-1185">Reference proteome</keyword>
<keyword id="KW-0677">Repeat</keyword>
<keyword id="KW-0694">RNA-binding</keyword>
<sequence length="407" mass="43820">MLLSVTSRPGISTFGYNKNNKKPYVSLSQQMAPPSPSSSTPNSSSGSTAHDQLSKTNLYIRGLQPSTTDQDLVKLCQSYGKIVSTKAILDKTTNKCKGYGFVDFDSPSAAQKAVTALKASGVQAQMAKQQEQDPTNLYISNLPLSMDEQELEGMLKPFGQVISTRILRDTSGTSRGVGFARMESTEKCEAIITHFNGKYIKTPPGVPAPSDPLLCKFADGGPKKRQNQGKFVQNGRAWPRNGDMGGMALTYDPSTALQNGFYPAPYNLAPNRMLTQSALSPYLPSPMTSYQRVTQTSPLQAPSPSWMHHQSYLMQPSGSVLTPGMDHPISLQPASMVGPLTQQLGHLSLSSTGTYVPTAAAMQGAYLSQYTPVPSSSVSVEESGSQQSQVPVDAPSEHGVYSFQFNK</sequence>
<protein>
    <recommendedName>
        <fullName>RNA-binding motif, single-stranded-interacting protein 2</fullName>
    </recommendedName>
</protein>
<evidence type="ECO:0000250" key="1">
    <source>
        <dbReference type="UniProtKB" id="Q15434"/>
    </source>
</evidence>
<evidence type="ECO:0000255" key="2">
    <source>
        <dbReference type="PROSITE-ProRule" id="PRU00176"/>
    </source>
</evidence>
<evidence type="ECO:0000256" key="3">
    <source>
        <dbReference type="SAM" id="MobiDB-lite"/>
    </source>
</evidence>
<evidence type="ECO:0000305" key="4"/>
<proteinExistence type="evidence at transcript level"/>
<organism>
    <name type="scientific">Bos taurus</name>
    <name type="common">Bovine</name>
    <dbReference type="NCBI Taxonomy" id="9913"/>
    <lineage>
        <taxon>Eukaryota</taxon>
        <taxon>Metazoa</taxon>
        <taxon>Chordata</taxon>
        <taxon>Craniata</taxon>
        <taxon>Vertebrata</taxon>
        <taxon>Euteleostomi</taxon>
        <taxon>Mammalia</taxon>
        <taxon>Eutheria</taxon>
        <taxon>Laurasiatheria</taxon>
        <taxon>Artiodactyla</taxon>
        <taxon>Ruminantia</taxon>
        <taxon>Pecora</taxon>
        <taxon>Bovidae</taxon>
        <taxon>Bovinae</taxon>
        <taxon>Bos</taxon>
    </lineage>
</organism>